<organism>
    <name type="scientific">Pseudomonas putida</name>
    <name type="common">Arthrobacter siderocapsulatus</name>
    <dbReference type="NCBI Taxonomy" id="303"/>
    <lineage>
        <taxon>Bacteria</taxon>
        <taxon>Pseudomonadati</taxon>
        <taxon>Pseudomonadota</taxon>
        <taxon>Gammaproteobacteria</taxon>
        <taxon>Pseudomonadales</taxon>
        <taxon>Pseudomonadaceae</taxon>
        <taxon>Pseudomonas</taxon>
    </lineage>
</organism>
<proteinExistence type="evidence at protein level"/>
<feature type="chain" id="PRO_0000052225" description="Linalool 8-monooxygenase">
    <location>
        <begin position="1"/>
        <end position="406"/>
    </location>
</feature>
<feature type="binding site" description="axial binding residue" evidence="1">
    <location>
        <position position="355"/>
    </location>
    <ligand>
        <name>heme</name>
        <dbReference type="ChEBI" id="CHEBI:30413"/>
    </ligand>
    <ligandPart>
        <name>Fe</name>
        <dbReference type="ChEBI" id="CHEBI:18248"/>
    </ligandPart>
</feature>
<comment type="function">
    <text evidence="2">Catalyzes the 8-methyl hydroxylation of linalool.</text>
</comment>
<comment type="catalytic activity">
    <reaction evidence="2">
        <text>linalool + 2 reduced [NADPH--hemoprotein reductase] + 2 O2 = (6E)-8-oxolinalool + 2 oxidized [NADPH--hemoprotein reductase] + 3 H2O + 2 H(+)</text>
        <dbReference type="Rhea" id="RHEA:32635"/>
        <dbReference type="Rhea" id="RHEA-COMP:11964"/>
        <dbReference type="Rhea" id="RHEA-COMP:11965"/>
        <dbReference type="ChEBI" id="CHEBI:15377"/>
        <dbReference type="ChEBI" id="CHEBI:15378"/>
        <dbReference type="ChEBI" id="CHEBI:15379"/>
        <dbReference type="ChEBI" id="CHEBI:17580"/>
        <dbReference type="ChEBI" id="CHEBI:57618"/>
        <dbReference type="ChEBI" id="CHEBI:58210"/>
        <dbReference type="ChEBI" id="CHEBI:64259"/>
        <dbReference type="EC" id="1.14.14.84"/>
    </reaction>
</comment>
<comment type="cofactor">
    <cofactor>
        <name>heme</name>
        <dbReference type="ChEBI" id="CHEBI:30413"/>
    </cofactor>
</comment>
<comment type="pathway">
    <text>Terpene metabolism; linalool degradation.</text>
</comment>
<comment type="similarity">
    <text evidence="3">Belongs to the cytochrome P450 family.</text>
</comment>
<protein>
    <recommendedName>
        <fullName>Linalool 8-monooxygenase</fullName>
        <ecNumber evidence="2">1.14.14.84</ecNumber>
    </recommendedName>
    <alternativeName>
        <fullName>Cytochrome P450 111</fullName>
    </alternativeName>
    <alternativeName>
        <fullName>Cytochrome P450lin</fullName>
    </alternativeName>
</protein>
<evidence type="ECO:0000250" key="1"/>
<evidence type="ECO:0000269" key="2">
    <source>
    </source>
</evidence>
<evidence type="ECO:0000305" key="3"/>
<gene>
    <name type="primary">linC</name>
    <name type="synonym">cyp111</name>
</gene>
<keyword id="KW-0349">Heme</keyword>
<keyword id="KW-0408">Iron</keyword>
<keyword id="KW-0479">Metal-binding</keyword>
<keyword id="KW-0503">Monooxygenase</keyword>
<keyword id="KW-0520">NAD</keyword>
<keyword id="KW-0560">Oxidoreductase</keyword>
<reference key="1">
    <citation type="journal article" date="1993" name="J. Bacteriol.">
        <title>Cloning and expression of a member of a new cytochrome P-450 family: cytochrome P-450lin (CYP111) from Pseudomonas incognita.</title>
        <authorList>
            <person name="Ropp J.D."/>
            <person name="Gunsalus I.C."/>
            <person name="Sligar S.G."/>
        </authorList>
    </citation>
    <scope>NUCLEOTIDE SEQUENCE [GENOMIC DNA]</scope>
    <source>
        <strain>D110R</strain>
    </source>
</reference>
<reference key="2">
    <citation type="journal article" date="1990" name="J. Biol. Chem.">
        <title>Protein components of a cytochrome P-450 linalool 8-methyl hydroxylase.</title>
        <authorList>
            <person name="Ullah A.J."/>
            <person name="Murray R.I."/>
            <person name="Bhattacharyya P.K."/>
            <person name="Wagner G.C."/>
            <person name="Gunsalus I.C."/>
        </authorList>
    </citation>
    <scope>FUNCTION</scope>
    <scope>CATALYTIC ACTIVITY</scope>
    <source>
        <strain>G777</strain>
    </source>
</reference>
<reference key="3">
    <citation type="journal article" date="1987" name="Arch. Biochem. Biophys.">
        <title>P-450 binding to substrates camphor and linalool versus pressure.</title>
        <authorList>
            <person name="Marden M.C."/>
            <person name="Hui Bon Hoa G."/>
        </authorList>
    </citation>
    <scope>ABSORPTION SPECTROSCOPY</scope>
</reference>
<reference key="4">
    <citation type="journal article" date="1987" name="Studia Biophys.">
        <title>Dynamic behavior of the active site structure in bacterial cytochrome P-450.</title>
        <authorList>
            <person name="Jung C."/>
            <person name="Marlow F."/>
        </authorList>
    </citation>
    <scope>FOURIER-TRANSFORM INFRARED SPECTROSCOPY</scope>
</reference>
<reference key="5">
    <citation type="journal article" date="1989" name="Biochemistry">
        <title>Conformational changes of cytochromes P-450cam and P-450lin induced by high pressure.</title>
        <authorList>
            <person name="Hui Bon Hoa G."/>
            <person name="Di Primo C."/>
            <person name="Dondaine I."/>
            <person name="Sligar S.G."/>
            <person name="Gunsalus I.C."/>
            <person name="Douzou P."/>
        </authorList>
    </citation>
    <scope>ABSORPTION SPECTROSCOPY</scope>
    <scope>FLUORESCENCE SPECTROSCOPY</scope>
</reference>
<reference key="6">
    <citation type="journal article" date="1992" name="Biochim. Biophys. Acta">
        <title>Multichannel circular dichroism investigations of the structural stability of bacterial cytochrome P-450.</title>
        <authorList>
            <person name="Nolting B."/>
            <person name="Jung C."/>
            <person name="Snatzke G."/>
        </authorList>
    </citation>
    <scope>CIRCULAR DICHROISM ANALYSIS</scope>
</reference>
<reference key="7">
    <citation type="journal article" date="2002" name="J. Inorg. Biochem.">
        <title>Specific and non-specific effects of potassium cations on substrate-protein interactions in cytochromes P450cam and P450lin.</title>
        <authorList>
            <person name="Deprez E."/>
            <person name="Gill E."/>
            <person name="Helms V."/>
            <person name="Wade R."/>
            <person name="Hui Bon Hoa G."/>
        </authorList>
    </citation>
    <scope>SUBSTRATE-PROTEIN INTERACTION</scope>
</reference>
<dbReference type="EC" id="1.14.14.84" evidence="2"/>
<dbReference type="EMBL" id="L23310">
    <property type="protein sequence ID" value="AAA25810.1"/>
    <property type="molecule type" value="Genomic_DNA"/>
</dbReference>
<dbReference type="PIR" id="A48495">
    <property type="entry name" value="A48495"/>
</dbReference>
<dbReference type="SMR" id="Q59723"/>
<dbReference type="KEGG" id="ag:AAA25810"/>
<dbReference type="BRENDA" id="1.14.14.84">
    <property type="organism ID" value="5092"/>
</dbReference>
<dbReference type="UniPathway" id="UPA00721"/>
<dbReference type="GO" id="GO:0020037">
    <property type="term" value="F:heme binding"/>
    <property type="evidence" value="ECO:0007669"/>
    <property type="project" value="InterPro"/>
</dbReference>
<dbReference type="GO" id="GO:0005506">
    <property type="term" value="F:iron ion binding"/>
    <property type="evidence" value="ECO:0007669"/>
    <property type="project" value="InterPro"/>
</dbReference>
<dbReference type="GO" id="GO:0050056">
    <property type="term" value="F:linalool 8-monooxygenase activity"/>
    <property type="evidence" value="ECO:0007669"/>
    <property type="project" value="UniProtKB-EC"/>
</dbReference>
<dbReference type="CDD" id="cd11033">
    <property type="entry name" value="CYP142-like"/>
    <property type="match status" value="1"/>
</dbReference>
<dbReference type="FunFam" id="1.10.630.10:FF:000018">
    <property type="entry name" value="Cytochrome P450 monooxygenase"/>
    <property type="match status" value="1"/>
</dbReference>
<dbReference type="Gene3D" id="1.10.630.10">
    <property type="entry name" value="Cytochrome P450"/>
    <property type="match status" value="1"/>
</dbReference>
<dbReference type="InterPro" id="IPR001128">
    <property type="entry name" value="Cyt_P450"/>
</dbReference>
<dbReference type="InterPro" id="IPR002397">
    <property type="entry name" value="Cyt_P450_B"/>
</dbReference>
<dbReference type="InterPro" id="IPR017972">
    <property type="entry name" value="Cyt_P450_CS"/>
</dbReference>
<dbReference type="InterPro" id="IPR036396">
    <property type="entry name" value="Cyt_P450_sf"/>
</dbReference>
<dbReference type="PANTHER" id="PTHR46696:SF1">
    <property type="entry name" value="CYTOCHROME P450 YJIB-RELATED"/>
    <property type="match status" value="1"/>
</dbReference>
<dbReference type="PANTHER" id="PTHR46696">
    <property type="entry name" value="P450, PUTATIVE (EUROFUNG)-RELATED"/>
    <property type="match status" value="1"/>
</dbReference>
<dbReference type="Pfam" id="PF00067">
    <property type="entry name" value="p450"/>
    <property type="match status" value="1"/>
</dbReference>
<dbReference type="PRINTS" id="PR00359">
    <property type="entry name" value="BP450"/>
</dbReference>
<dbReference type="SUPFAM" id="SSF48264">
    <property type="entry name" value="Cytochrome P450"/>
    <property type="match status" value="1"/>
</dbReference>
<dbReference type="PROSITE" id="PS00086">
    <property type="entry name" value="CYTOCHROME_P450"/>
    <property type="match status" value="1"/>
</dbReference>
<sequence length="406" mass="45637">MERPDLKNPDLYTQQVPHDIFARLRREEPVYWNPESDGSGFWAVLRHKDIIEVSRQPLLFSSAYENGGHRIFNENEVGLTNAGEAAVGVPFISLDPPVHTQYRKVIMPALSPARLGDIEQRIRVRAEALIERIPLGEEVDLVPLLSAPLPLLTLAELLGLDPDCWYELYNWTNAFVGEDDPEFRKSPEDMAKVLGEFMGFCQELFESRRANPGPDIATLLANAEINGQPVALRDFIGNLTLTLVGGNETTRNSISHTIVTLSQQPDQWDILRQRPELLKTATAEMVRHASPVLHMRRTAMEDTEIGGQAIAKGDKVVLWYASGNRDESVFSDADRFDVTRTGVQHVGFGSGQHVCVGSRLAEMQLRVVFEILSTRVKRFELCSKSRRFRSNFLNGLKNLNVVLVPK</sequence>
<name>CPXO_PSEPU</name>
<accession>Q59723</accession>